<name>ACDG1_METTE</name>
<comment type="function">
    <text evidence="1">Part of a complex that catalyzes the reversible cleavage of acetyl-CoA, allowing growth on acetate as sole source of carbon and energy.</text>
</comment>
<comment type="catalytic activity">
    <reaction evidence="1 3">
        <text>5,6,7,8-tetrahydrosarcinapterin + methyl-Co(III)-[corrinoid Fe-S protein] = 5-methyltetrahydrosarcinapterin + Co(I)-[corrinoid Fe-S protein] + H(+)</text>
        <dbReference type="Rhea" id="RHEA:45196"/>
        <dbReference type="Rhea" id="RHEA-COMP:11110"/>
        <dbReference type="Rhea" id="RHEA-COMP:11111"/>
        <dbReference type="ChEBI" id="CHEBI:15378"/>
        <dbReference type="ChEBI" id="CHEBI:59924"/>
        <dbReference type="ChEBI" id="CHEBI:64267"/>
        <dbReference type="ChEBI" id="CHEBI:85033"/>
        <dbReference type="ChEBI" id="CHEBI:85035"/>
        <dbReference type="EC" id="2.1.1.245"/>
    </reaction>
</comment>
<comment type="cofactor">
    <cofactor evidence="1">
        <name>corrinoid</name>
        <dbReference type="ChEBI" id="CHEBI:33913"/>
    </cofactor>
</comment>
<comment type="cofactor">
    <cofactor evidence="1">
        <name>[4Fe-4S] cluster</name>
        <dbReference type="ChEBI" id="CHEBI:49883"/>
    </cofactor>
    <text evidence="1">Binds 1 [4Fe-4S] cluster.</text>
</comment>
<comment type="pathway">
    <text evidence="1">One-carbon metabolism; methanogenesis from acetate.</text>
</comment>
<comment type="subunit">
    <text evidence="1">Heterodimer of delta and gamma chains. The ACDS complex is made up of alpha, epsilon, beta, gamma and delta chains with a probable stoichiometry of (alpha(2)epsilon(2))(4)-beta(8)-(gamma(1)delta(1))(8).</text>
</comment>
<proteinExistence type="evidence at protein level"/>
<sequence>MKINSPLEAYKYLPQTNCGECGEPTCMAFASKLIDRSGKTSDCPPLVKEKKYAKKLAELDRLLAPEIRQVTIGVGEKAANIGGDDVLYRHKLTFFNKTKMFFDVSDNMEEDALIERVKKIADFKKFYVGRNLLLDGVAIKATSNDPAKFAAAVKKVAEIGLPMIFCSFNPAVLKAGLEVAKDKNPLLYAANKDNWKEVGELALEYKVPVVVSVFNDLDGLKSLAKTFAEAGIKDIVLDPGTYPSGKGLKDTFTNFLKIRRAGIMGDTEIAYPIMALPLTAWMAGISDPVSASYWETVIASVFTIRYGDIMILHSLEPYAALPEMHLAETIYTDPRTPVSVDGGMYKVGEPDKDSPVFFTTNFALTYYTVESDISANGIVCWLLAVDTDGIGVEAAVAGGQLTSAKVKDAFEKAGFDLKTDTNHNTLIIPGLSARLQGDLEDTLGANVKVGPMDSGRIPGWVEKNWPPK</sequence>
<protein>
    <recommendedName>
        <fullName evidence="1">Acetyl-CoA decarbonylase/synthase complex subunit gamma 1</fullName>
        <shortName evidence="1">ACDS complex subunit gamma 1</shortName>
        <ecNumber evidence="1 3">2.1.1.245</ecNumber>
    </recommendedName>
    <alternativeName>
        <fullName evidence="1">5-methyltetrahydrosarcinapterin:corrinoid/iron-sulfur protein Co-methyltransferase 1</fullName>
    </alternativeName>
    <alternativeName>
        <fullName evidence="1">ACDS complex methyltransferase 1</fullName>
    </alternativeName>
    <alternativeName>
        <fullName evidence="1">Corrinoid/iron-sulfur component large subunit 1</fullName>
    </alternativeName>
</protein>
<accession>Q50539</accession>
<dbReference type="EC" id="2.1.1.245" evidence="1 3"/>
<dbReference type="EMBL" id="U30484">
    <property type="protein sequence ID" value="AAA93168.1"/>
    <property type="molecule type" value="Genomic_DNA"/>
</dbReference>
<dbReference type="SMR" id="Q50539"/>
<dbReference type="KEGG" id="ag:AAA93168"/>
<dbReference type="BioCyc" id="MetaCyc:CDHEMSARC-MONOMER"/>
<dbReference type="BRENDA" id="2.1.1.245">
    <property type="organism ID" value="3281"/>
</dbReference>
<dbReference type="UniPathway" id="UPA00642"/>
<dbReference type="GO" id="GO:0051539">
    <property type="term" value="F:4 iron, 4 sulfur cluster binding"/>
    <property type="evidence" value="ECO:0007669"/>
    <property type="project" value="UniProtKB-KW"/>
</dbReference>
<dbReference type="GO" id="GO:0043885">
    <property type="term" value="F:anaerobic carbon-monoxide dehydrogenase activity"/>
    <property type="evidence" value="ECO:0000314"/>
    <property type="project" value="MENGO"/>
</dbReference>
<dbReference type="GO" id="GO:0005506">
    <property type="term" value="F:iron ion binding"/>
    <property type="evidence" value="ECO:0007669"/>
    <property type="project" value="UniProtKB-UniRule"/>
</dbReference>
<dbReference type="GO" id="GO:0008168">
    <property type="term" value="F:methyltransferase activity"/>
    <property type="evidence" value="ECO:0007669"/>
    <property type="project" value="UniProtKB-UniRule"/>
</dbReference>
<dbReference type="GO" id="GO:0046356">
    <property type="term" value="P:acetyl-CoA catabolic process"/>
    <property type="evidence" value="ECO:0007669"/>
    <property type="project" value="InterPro"/>
</dbReference>
<dbReference type="GO" id="GO:0019385">
    <property type="term" value="P:methanogenesis, from acetate"/>
    <property type="evidence" value="ECO:0007669"/>
    <property type="project" value="UniProtKB-UniRule"/>
</dbReference>
<dbReference type="GO" id="GO:0032259">
    <property type="term" value="P:methylation"/>
    <property type="evidence" value="ECO:0007669"/>
    <property type="project" value="UniProtKB-KW"/>
</dbReference>
<dbReference type="FunFam" id="3.20.20.20:FF:000020">
    <property type="entry name" value="Acetyl-CoA decarbonylase/synthase complex subunit gamma"/>
    <property type="match status" value="1"/>
</dbReference>
<dbReference type="Gene3D" id="3.40.50.11600">
    <property type="match status" value="1"/>
</dbReference>
<dbReference type="Gene3D" id="3.20.20.20">
    <property type="entry name" value="Dihydropteroate synthase-like"/>
    <property type="match status" value="1"/>
</dbReference>
<dbReference type="HAMAP" id="MF_01136">
    <property type="entry name" value="CdhE"/>
    <property type="match status" value="1"/>
</dbReference>
<dbReference type="InterPro" id="IPR007202">
    <property type="entry name" value="4Fe-4S_dom"/>
</dbReference>
<dbReference type="InterPro" id="IPR016041">
    <property type="entry name" value="Ac-CoA_synth_d_su_TIM-brl"/>
</dbReference>
<dbReference type="InterPro" id="IPR051069">
    <property type="entry name" value="ACDS_complex_subunit"/>
</dbReference>
<dbReference type="InterPro" id="IPR016218">
    <property type="entry name" value="AcylCoA_decarb/synth_gsu"/>
</dbReference>
<dbReference type="InterPro" id="IPR023427">
    <property type="entry name" value="AcylCoA_decarb/synth_gsu_arc"/>
</dbReference>
<dbReference type="InterPro" id="IPR011005">
    <property type="entry name" value="Dihydropteroate_synth-like_sf"/>
</dbReference>
<dbReference type="NCBIfam" id="NF003195">
    <property type="entry name" value="PRK04165.1"/>
    <property type="match status" value="1"/>
</dbReference>
<dbReference type="PANTHER" id="PTHR36214">
    <property type="match status" value="1"/>
</dbReference>
<dbReference type="PANTHER" id="PTHR36214:SF3">
    <property type="entry name" value="ACETYL-COA DECARBONYLASE_SYNTHASE COMPLEX SUBUNIT GAMMA"/>
    <property type="match status" value="1"/>
</dbReference>
<dbReference type="Pfam" id="PF03599">
    <property type="entry name" value="CdhD"/>
    <property type="match status" value="1"/>
</dbReference>
<dbReference type="Pfam" id="PF04060">
    <property type="entry name" value="FeS"/>
    <property type="match status" value="1"/>
</dbReference>
<dbReference type="PIRSF" id="PIRSF000376">
    <property type="entry name" value="AcCoA_decarb_gamma"/>
    <property type="match status" value="1"/>
</dbReference>
<dbReference type="SUPFAM" id="SSF51717">
    <property type="entry name" value="Dihydropteroate synthetase-like"/>
    <property type="match status" value="1"/>
</dbReference>
<dbReference type="PROSITE" id="PS51656">
    <property type="entry name" value="4FE4S"/>
    <property type="match status" value="1"/>
</dbReference>
<reference key="1">
    <citation type="journal article" date="1996" name="J. Bacteriol.">
        <title>Characterization of the cdhD and cdhE genes encoding subunits of the corrinoid/iron-sulfur enzyme of the CO dehydrogenase complex from Methanosarcina thermophila.</title>
        <authorList>
            <person name="Maupin-Furlow J."/>
            <person name="Ferry J.G."/>
        </authorList>
    </citation>
    <scope>NUCLEOTIDE SEQUENCE [GENOMIC DNA]</scope>
    <scope>PROTEIN SEQUENCE OF 1-19</scope>
    <source>
        <strain>ATCC 43570 / DSM 1825 / OCM 12 / TM-1</strain>
    </source>
</reference>
<reference key="2">
    <citation type="journal article" date="1996" name="J. Biol. Chem.">
        <title>Partial reactions catalyzed by protein components of the acetyl-CoA decarbonylase synthase enzyme complex from Methanosarcina barkeri.</title>
        <authorList>
            <person name="Grahame D.A."/>
            <person name="DeMoll E."/>
        </authorList>
    </citation>
    <scope>CHARACTERIZATION OF PARTIAL REACTIONS IN THE ACDS COMPLEX</scope>
    <scope>CATALYTIC ACTIVITY</scope>
</reference>
<organism>
    <name type="scientific">Methanosarcina thermophila</name>
    <dbReference type="NCBI Taxonomy" id="2210"/>
    <lineage>
        <taxon>Archaea</taxon>
        <taxon>Methanobacteriati</taxon>
        <taxon>Methanobacteriota</taxon>
        <taxon>Stenosarchaea group</taxon>
        <taxon>Methanomicrobia</taxon>
        <taxon>Methanosarcinales</taxon>
        <taxon>Methanosarcinaceae</taxon>
        <taxon>Methanosarcina</taxon>
    </lineage>
</organism>
<feature type="chain" id="PRO_0000155124" description="Acetyl-CoA decarbonylase/synthase complex subunit gamma 1">
    <location>
        <begin position="1"/>
        <end position="468"/>
    </location>
</feature>
<feature type="domain" description="4Fe-4S" evidence="2">
    <location>
        <begin position="1"/>
        <end position="61"/>
    </location>
</feature>
<feature type="binding site" evidence="1">
    <location>
        <position position="18"/>
    </location>
    <ligand>
        <name>[4Fe-4S] cluster</name>
        <dbReference type="ChEBI" id="CHEBI:49883"/>
    </ligand>
</feature>
<feature type="binding site" evidence="1">
    <location>
        <position position="21"/>
    </location>
    <ligand>
        <name>[4Fe-4S] cluster</name>
        <dbReference type="ChEBI" id="CHEBI:49883"/>
    </ligand>
</feature>
<feature type="binding site" evidence="1">
    <location>
        <position position="26"/>
    </location>
    <ligand>
        <name>[4Fe-4S] cluster</name>
        <dbReference type="ChEBI" id="CHEBI:49883"/>
    </ligand>
</feature>
<feature type="binding site" evidence="1">
    <location>
        <position position="43"/>
    </location>
    <ligand>
        <name>[4Fe-4S] cluster</name>
        <dbReference type="ChEBI" id="CHEBI:49883"/>
    </ligand>
</feature>
<gene>
    <name evidence="1" type="primary">cdhE1</name>
</gene>
<evidence type="ECO:0000255" key="1">
    <source>
        <dbReference type="HAMAP-Rule" id="MF_01136"/>
    </source>
</evidence>
<evidence type="ECO:0000255" key="2">
    <source>
        <dbReference type="PROSITE-ProRule" id="PRU00989"/>
    </source>
</evidence>
<evidence type="ECO:0000269" key="3">
    <source>
    </source>
</evidence>
<keyword id="KW-0004">4Fe-4S</keyword>
<keyword id="KW-0170">Cobalt</keyword>
<keyword id="KW-0903">Direct protein sequencing</keyword>
<keyword id="KW-0408">Iron</keyword>
<keyword id="KW-0411">Iron-sulfur</keyword>
<keyword id="KW-0479">Metal-binding</keyword>
<keyword id="KW-0484">Methanogenesis</keyword>
<keyword id="KW-0489">Methyltransferase</keyword>
<keyword id="KW-0808">Transferase</keyword>